<evidence type="ECO:0000255" key="1">
    <source>
        <dbReference type="HAMAP-Rule" id="MF_00558"/>
    </source>
</evidence>
<accession>Q3INN3</accession>
<feature type="chain" id="PRO_1000082136" description="Succinate--CoA ligase [ADP-forming] subunit beta">
    <location>
        <begin position="1"/>
        <end position="380"/>
    </location>
</feature>
<feature type="domain" description="ATP-grasp" evidence="1">
    <location>
        <begin position="9"/>
        <end position="236"/>
    </location>
</feature>
<feature type="binding site" evidence="1">
    <location>
        <position position="45"/>
    </location>
    <ligand>
        <name>ATP</name>
        <dbReference type="ChEBI" id="CHEBI:30616"/>
    </ligand>
</feature>
<feature type="binding site" evidence="1">
    <location>
        <begin position="52"/>
        <end position="54"/>
    </location>
    <ligand>
        <name>ATP</name>
        <dbReference type="ChEBI" id="CHEBI:30616"/>
    </ligand>
</feature>
<feature type="binding site" evidence="1">
    <location>
        <position position="91"/>
    </location>
    <ligand>
        <name>ATP</name>
        <dbReference type="ChEBI" id="CHEBI:30616"/>
    </ligand>
</feature>
<feature type="binding site" evidence="1">
    <location>
        <position position="94"/>
    </location>
    <ligand>
        <name>ATP</name>
        <dbReference type="ChEBI" id="CHEBI:30616"/>
    </ligand>
</feature>
<feature type="binding site" evidence="1">
    <location>
        <position position="99"/>
    </location>
    <ligand>
        <name>ATP</name>
        <dbReference type="ChEBI" id="CHEBI:30616"/>
    </ligand>
</feature>
<feature type="binding site" evidence="1">
    <location>
        <position position="191"/>
    </location>
    <ligand>
        <name>Mg(2+)</name>
        <dbReference type="ChEBI" id="CHEBI:18420"/>
    </ligand>
</feature>
<feature type="binding site" evidence="1">
    <location>
        <position position="205"/>
    </location>
    <ligand>
        <name>Mg(2+)</name>
        <dbReference type="ChEBI" id="CHEBI:18420"/>
    </ligand>
</feature>
<feature type="binding site" evidence="1">
    <location>
        <position position="256"/>
    </location>
    <ligand>
        <name>substrate</name>
        <note>ligand shared with subunit alpha</note>
    </ligand>
</feature>
<feature type="binding site" evidence="1">
    <location>
        <begin position="313"/>
        <end position="315"/>
    </location>
    <ligand>
        <name>substrate</name>
        <note>ligand shared with subunit alpha</note>
    </ligand>
</feature>
<comment type="function">
    <text evidence="1">Succinyl-CoA synthetase functions in the citric acid cycle (TCA), coupling the hydrolysis of succinyl-CoA to the synthesis of either ATP or GTP and thus represents the only step of substrate-level phosphorylation in the TCA. The beta subunit provides nucleotide specificity of the enzyme and binds the substrate succinate, while the binding sites for coenzyme A and phosphate are found in the alpha subunit.</text>
</comment>
<comment type="catalytic activity">
    <reaction evidence="1">
        <text>succinate + ATP + CoA = succinyl-CoA + ADP + phosphate</text>
        <dbReference type="Rhea" id="RHEA:17661"/>
        <dbReference type="ChEBI" id="CHEBI:30031"/>
        <dbReference type="ChEBI" id="CHEBI:30616"/>
        <dbReference type="ChEBI" id="CHEBI:43474"/>
        <dbReference type="ChEBI" id="CHEBI:57287"/>
        <dbReference type="ChEBI" id="CHEBI:57292"/>
        <dbReference type="ChEBI" id="CHEBI:456216"/>
        <dbReference type="EC" id="6.2.1.5"/>
    </reaction>
    <physiologicalReaction direction="right-to-left" evidence="1">
        <dbReference type="Rhea" id="RHEA:17663"/>
    </physiologicalReaction>
</comment>
<comment type="catalytic activity">
    <reaction evidence="1">
        <text>GTP + succinate + CoA = succinyl-CoA + GDP + phosphate</text>
        <dbReference type="Rhea" id="RHEA:22120"/>
        <dbReference type="ChEBI" id="CHEBI:30031"/>
        <dbReference type="ChEBI" id="CHEBI:37565"/>
        <dbReference type="ChEBI" id="CHEBI:43474"/>
        <dbReference type="ChEBI" id="CHEBI:57287"/>
        <dbReference type="ChEBI" id="CHEBI:57292"/>
        <dbReference type="ChEBI" id="CHEBI:58189"/>
    </reaction>
    <physiologicalReaction direction="right-to-left" evidence="1">
        <dbReference type="Rhea" id="RHEA:22122"/>
    </physiologicalReaction>
</comment>
<comment type="cofactor">
    <cofactor evidence="1">
        <name>Mg(2+)</name>
        <dbReference type="ChEBI" id="CHEBI:18420"/>
    </cofactor>
    <text evidence="1">Binds 1 Mg(2+) ion per subunit.</text>
</comment>
<comment type="pathway">
    <text evidence="1">Carbohydrate metabolism; tricarboxylic acid cycle; succinate from succinyl-CoA (ligase route): step 1/1.</text>
</comment>
<comment type="subunit">
    <text evidence="1">Heterotetramer of two alpha and two beta subunits.</text>
</comment>
<comment type="similarity">
    <text evidence="1">Belongs to the succinate/malate CoA ligase beta subunit family.</text>
</comment>
<protein>
    <recommendedName>
        <fullName evidence="1">Succinate--CoA ligase [ADP-forming] subunit beta</fullName>
        <ecNumber evidence="1">6.2.1.5</ecNumber>
    </recommendedName>
    <alternativeName>
        <fullName evidence="1">Succinyl-CoA synthetase subunit beta</fullName>
        <shortName evidence="1">SCS-beta</shortName>
    </alternativeName>
</protein>
<organism>
    <name type="scientific">Natronomonas pharaonis (strain ATCC 35678 / DSM 2160 / CIP 103997 / JCM 8858 / NBRC 14720 / NCIMB 2260 / Gabara)</name>
    <name type="common">Halobacterium pharaonis</name>
    <dbReference type="NCBI Taxonomy" id="348780"/>
    <lineage>
        <taxon>Archaea</taxon>
        <taxon>Methanobacteriati</taxon>
        <taxon>Methanobacteriota</taxon>
        <taxon>Stenosarchaea group</taxon>
        <taxon>Halobacteria</taxon>
        <taxon>Halobacteriales</taxon>
        <taxon>Haloarculaceae</taxon>
        <taxon>Natronomonas</taxon>
    </lineage>
</organism>
<gene>
    <name evidence="1" type="primary">sucC</name>
    <name type="ordered locus">NP_4356A</name>
</gene>
<sequence>MKLHEYQAKGVFADAGIPVPESTLASTVDEAVEAADDIGYPVAIKAQVQVGGRGKAGGIKLVENADEAREAADEILGMDLKGLHVDRVLVEAAVDFTDELYVGVTMDRAAGKPVAMVSTRGGVNIEEVAEEDPDAIVREHIDPAFGMHPFQARKAAFEAGVDRAVANDVASILTQLYELWADKDATEIEVNPLMVTDDDEVIAADAVMNIDEDALFRHPDLEEMEEEAAGDELEAKANEYGFDYVRLSGNTGIIGNGAGLVMTTLDLVDHYGGEPANFLDIGGGAKAERVANALDMVFSDDNVDSVVFNIFGGITRGDEVAKGINEALEQFDEIPKPVVVRLAGTNAEEGMEILNTDLVTVEKTLEDAVQRAVKYAEEEQ</sequence>
<name>SUCC_NATPD</name>
<proteinExistence type="inferred from homology"/>
<keyword id="KW-0067">ATP-binding</keyword>
<keyword id="KW-0436">Ligase</keyword>
<keyword id="KW-0460">Magnesium</keyword>
<keyword id="KW-0479">Metal-binding</keyword>
<keyword id="KW-0547">Nucleotide-binding</keyword>
<keyword id="KW-1185">Reference proteome</keyword>
<keyword id="KW-0816">Tricarboxylic acid cycle</keyword>
<reference key="1">
    <citation type="journal article" date="2005" name="Genome Res.">
        <title>Living with two extremes: conclusions from the genome sequence of Natronomonas pharaonis.</title>
        <authorList>
            <person name="Falb M."/>
            <person name="Pfeiffer F."/>
            <person name="Palm P."/>
            <person name="Rodewald K."/>
            <person name="Hickmann V."/>
            <person name="Tittor J."/>
            <person name="Oesterhelt D."/>
        </authorList>
    </citation>
    <scope>NUCLEOTIDE SEQUENCE [LARGE SCALE GENOMIC DNA]</scope>
    <source>
        <strain>ATCC 35678 / DSM 2160 / CIP 103997 / JCM 8858 / NBRC 14720 / NCIMB 2260 / Gabara</strain>
    </source>
</reference>
<dbReference type="EC" id="6.2.1.5" evidence="1"/>
<dbReference type="EMBL" id="CR936257">
    <property type="protein sequence ID" value="CAI50269.1"/>
    <property type="molecule type" value="Genomic_DNA"/>
</dbReference>
<dbReference type="RefSeq" id="WP_011323885.1">
    <property type="nucleotide sequence ID" value="NC_007426.1"/>
</dbReference>
<dbReference type="SMR" id="Q3INN3"/>
<dbReference type="STRING" id="348780.NP_4356A"/>
<dbReference type="EnsemblBacteria" id="CAI50269">
    <property type="protein sequence ID" value="CAI50269"/>
    <property type="gene ID" value="NP_4356A"/>
</dbReference>
<dbReference type="GeneID" id="3703219"/>
<dbReference type="KEGG" id="nph:NP_4356A"/>
<dbReference type="eggNOG" id="arCOG01337">
    <property type="taxonomic scope" value="Archaea"/>
</dbReference>
<dbReference type="HOGENOM" id="CLU_037430_0_2_2"/>
<dbReference type="OrthoDB" id="146449at2157"/>
<dbReference type="UniPathway" id="UPA00223">
    <property type="reaction ID" value="UER00999"/>
</dbReference>
<dbReference type="Proteomes" id="UP000002698">
    <property type="component" value="Chromosome"/>
</dbReference>
<dbReference type="GO" id="GO:0042709">
    <property type="term" value="C:succinate-CoA ligase complex"/>
    <property type="evidence" value="ECO:0007669"/>
    <property type="project" value="TreeGrafter"/>
</dbReference>
<dbReference type="GO" id="GO:0005524">
    <property type="term" value="F:ATP binding"/>
    <property type="evidence" value="ECO:0007669"/>
    <property type="project" value="UniProtKB-UniRule"/>
</dbReference>
<dbReference type="GO" id="GO:0000287">
    <property type="term" value="F:magnesium ion binding"/>
    <property type="evidence" value="ECO:0007669"/>
    <property type="project" value="UniProtKB-UniRule"/>
</dbReference>
<dbReference type="GO" id="GO:0004775">
    <property type="term" value="F:succinate-CoA ligase (ADP-forming) activity"/>
    <property type="evidence" value="ECO:0007669"/>
    <property type="project" value="UniProtKB-UniRule"/>
</dbReference>
<dbReference type="GO" id="GO:0004776">
    <property type="term" value="F:succinate-CoA ligase (GDP-forming) activity"/>
    <property type="evidence" value="ECO:0007669"/>
    <property type="project" value="RHEA"/>
</dbReference>
<dbReference type="GO" id="GO:0006104">
    <property type="term" value="P:succinyl-CoA metabolic process"/>
    <property type="evidence" value="ECO:0007669"/>
    <property type="project" value="TreeGrafter"/>
</dbReference>
<dbReference type="GO" id="GO:0006099">
    <property type="term" value="P:tricarboxylic acid cycle"/>
    <property type="evidence" value="ECO:0007669"/>
    <property type="project" value="UniProtKB-UniRule"/>
</dbReference>
<dbReference type="FunFam" id="3.30.470.20:FF:000002">
    <property type="entry name" value="Succinate--CoA ligase [ADP-forming] subunit beta"/>
    <property type="match status" value="1"/>
</dbReference>
<dbReference type="FunFam" id="3.40.50.261:FF:000007">
    <property type="entry name" value="Succinate--CoA ligase [ADP-forming] subunit beta"/>
    <property type="match status" value="1"/>
</dbReference>
<dbReference type="Gene3D" id="3.30.1490.20">
    <property type="entry name" value="ATP-grasp fold, A domain"/>
    <property type="match status" value="1"/>
</dbReference>
<dbReference type="Gene3D" id="3.30.470.20">
    <property type="entry name" value="ATP-grasp fold, B domain"/>
    <property type="match status" value="1"/>
</dbReference>
<dbReference type="Gene3D" id="3.40.50.261">
    <property type="entry name" value="Succinyl-CoA synthetase domains"/>
    <property type="match status" value="1"/>
</dbReference>
<dbReference type="HAMAP" id="MF_00558">
    <property type="entry name" value="Succ_CoA_beta"/>
    <property type="match status" value="1"/>
</dbReference>
<dbReference type="InterPro" id="IPR011761">
    <property type="entry name" value="ATP-grasp"/>
</dbReference>
<dbReference type="InterPro" id="IPR013650">
    <property type="entry name" value="ATP-grasp_succ-CoA_synth-type"/>
</dbReference>
<dbReference type="InterPro" id="IPR013815">
    <property type="entry name" value="ATP_grasp_subdomain_1"/>
</dbReference>
<dbReference type="InterPro" id="IPR017866">
    <property type="entry name" value="Succ-CoA_synthase_bsu_CS"/>
</dbReference>
<dbReference type="InterPro" id="IPR005811">
    <property type="entry name" value="SUCC_ACL_C"/>
</dbReference>
<dbReference type="InterPro" id="IPR005809">
    <property type="entry name" value="Succ_CoA_ligase-like_bsu"/>
</dbReference>
<dbReference type="InterPro" id="IPR016102">
    <property type="entry name" value="Succinyl-CoA_synth-like"/>
</dbReference>
<dbReference type="NCBIfam" id="NF001913">
    <property type="entry name" value="PRK00696.1"/>
    <property type="match status" value="1"/>
</dbReference>
<dbReference type="NCBIfam" id="TIGR01016">
    <property type="entry name" value="sucCoAbeta"/>
    <property type="match status" value="1"/>
</dbReference>
<dbReference type="PANTHER" id="PTHR11815:SF10">
    <property type="entry name" value="SUCCINATE--COA LIGASE [GDP-FORMING] SUBUNIT BETA, MITOCHONDRIAL"/>
    <property type="match status" value="1"/>
</dbReference>
<dbReference type="PANTHER" id="PTHR11815">
    <property type="entry name" value="SUCCINYL-COA SYNTHETASE BETA CHAIN"/>
    <property type="match status" value="1"/>
</dbReference>
<dbReference type="Pfam" id="PF08442">
    <property type="entry name" value="ATP-grasp_2"/>
    <property type="match status" value="1"/>
</dbReference>
<dbReference type="Pfam" id="PF00549">
    <property type="entry name" value="Ligase_CoA"/>
    <property type="match status" value="1"/>
</dbReference>
<dbReference type="PIRSF" id="PIRSF001554">
    <property type="entry name" value="SucCS_beta"/>
    <property type="match status" value="1"/>
</dbReference>
<dbReference type="SUPFAM" id="SSF56059">
    <property type="entry name" value="Glutathione synthetase ATP-binding domain-like"/>
    <property type="match status" value="1"/>
</dbReference>
<dbReference type="SUPFAM" id="SSF52210">
    <property type="entry name" value="Succinyl-CoA synthetase domains"/>
    <property type="match status" value="1"/>
</dbReference>
<dbReference type="PROSITE" id="PS50975">
    <property type="entry name" value="ATP_GRASP"/>
    <property type="match status" value="1"/>
</dbReference>
<dbReference type="PROSITE" id="PS01217">
    <property type="entry name" value="SUCCINYL_COA_LIG_3"/>
    <property type="match status" value="1"/>
</dbReference>